<evidence type="ECO:0000255" key="1">
    <source>
        <dbReference type="HAMAP-Rule" id="MF_01567"/>
    </source>
</evidence>
<evidence type="ECO:0000305" key="2"/>
<protein>
    <recommendedName>
        <fullName evidence="1">UPF0371 protein spyM18_1356</fullName>
    </recommendedName>
</protein>
<feature type="chain" id="PRO_0000245623" description="UPF0371 protein spyM18_1356">
    <location>
        <begin position="1"/>
        <end position="494"/>
    </location>
</feature>
<proteinExistence type="inferred from homology"/>
<accession>Q8P0H7</accession>
<gene>
    <name type="ordered locus">spyM18_1356</name>
</gene>
<reference key="1">
    <citation type="journal article" date="2002" name="Proc. Natl. Acad. Sci. U.S.A.">
        <title>Genome sequence and comparative microarray analysis of serotype M18 group A Streptococcus strains associated with acute rheumatic fever outbreaks.</title>
        <authorList>
            <person name="Smoot J.C."/>
            <person name="Barbian K.D."/>
            <person name="Van Gompel J.J."/>
            <person name="Smoot L.M."/>
            <person name="Chaussee M.S."/>
            <person name="Sylva G.L."/>
            <person name="Sturdevant D.E."/>
            <person name="Ricklefs S.M."/>
            <person name="Porcella S.F."/>
            <person name="Parkins L.D."/>
            <person name="Beres S.B."/>
            <person name="Campbell D.S."/>
            <person name="Smith T.M."/>
            <person name="Zhang Q."/>
            <person name="Kapur V."/>
            <person name="Daly J.A."/>
            <person name="Veasy L.G."/>
            <person name="Musser J.M."/>
        </authorList>
    </citation>
    <scope>NUCLEOTIDE SEQUENCE [LARGE SCALE GENOMIC DNA]</scope>
    <source>
        <strain>MGAS8232</strain>
    </source>
</reference>
<organism>
    <name type="scientific">Streptococcus pyogenes serotype M18 (strain MGAS8232)</name>
    <dbReference type="NCBI Taxonomy" id="186103"/>
    <lineage>
        <taxon>Bacteria</taxon>
        <taxon>Bacillati</taxon>
        <taxon>Bacillota</taxon>
        <taxon>Bacilli</taxon>
        <taxon>Lactobacillales</taxon>
        <taxon>Streptococcaceae</taxon>
        <taxon>Streptococcus</taxon>
    </lineage>
</organism>
<sequence length="494" mass="55360">MKTIAFDSNKYLNLQRDHILERISQFDGKLYMEFGGKMLEDYHAARVLPGYEPDNKIKLLKELKEQVEIVIAINANNIEHSKARGDLGISYDQEVFRLIDKFNTLDIYVGSVVITQYNNQPAADAFRKQLEKNGIASYLHYPIKGYPTDINHIISSEGMGKNDYIKTSRNLIVVTAPGPGSGKLATCMSQMYHDQINGVKSGYAKFETFPVWNLPLHHPVNLAYEAATADLDDVNMIDPFHLETYGKTAVNYNRDIEVFPVLNRTFERILSKSPYASPTDMGVNMVGFSIVNEEAAIEASKQEIIRRYYQTLVDFKAERVTESAVKKIELLMNDIGVTPDDRHVTVAAHQKAEQTGQPALALQLPNGQIVTGKTSELFGPTAAVIINAIKTLAKIDKTTHLIEPEYVKPIQGLKVNHLGSHNPRLHSNEILIALAITAMTSEEANLAMKELGNLKGSEAHSTVILTEEDKNVLRKLGVNITFDPVYQHHKLYRK</sequence>
<comment type="similarity">
    <text evidence="1">Belongs to the UPF0371 family.</text>
</comment>
<comment type="sequence caution" evidence="2">
    <conflict type="erroneous initiation">
        <sequence resource="EMBL-CDS" id="AAL97953"/>
    </conflict>
</comment>
<name>Y1356_STRP8</name>
<dbReference type="EMBL" id="AE009949">
    <property type="protein sequence ID" value="AAL97953.1"/>
    <property type="status" value="ALT_INIT"/>
    <property type="molecule type" value="Genomic_DNA"/>
</dbReference>
<dbReference type="RefSeq" id="WP_011888813.1">
    <property type="nucleotide sequence ID" value="NC_003485.1"/>
</dbReference>
<dbReference type="SMR" id="Q8P0H7"/>
<dbReference type="KEGG" id="spm:spyM18_1356"/>
<dbReference type="HOGENOM" id="CLU_046981_0_0_9"/>
<dbReference type="Gene3D" id="1.20.1570.10">
    <property type="entry name" value="dip2346 domain like"/>
    <property type="match status" value="1"/>
</dbReference>
<dbReference type="Gene3D" id="3.10.630.10">
    <property type="entry name" value="dip2346 domain like"/>
    <property type="match status" value="1"/>
</dbReference>
<dbReference type="Gene3D" id="3.40.140.40">
    <property type="entry name" value="Domain of unknown function (DUF1846), C-terminal subdomain"/>
    <property type="match status" value="1"/>
</dbReference>
<dbReference type="HAMAP" id="MF_01567">
    <property type="entry name" value="UPF0371"/>
    <property type="match status" value="1"/>
</dbReference>
<dbReference type="InterPro" id="IPR014999">
    <property type="entry name" value="DUF1846"/>
</dbReference>
<dbReference type="InterPro" id="IPR048441">
    <property type="entry name" value="DUF1846_C"/>
</dbReference>
<dbReference type="InterPro" id="IPR048496">
    <property type="entry name" value="DUF1846_N"/>
</dbReference>
<dbReference type="NCBIfam" id="NF010184">
    <property type="entry name" value="PRK13663.1"/>
    <property type="match status" value="1"/>
</dbReference>
<dbReference type="Pfam" id="PF08903">
    <property type="entry name" value="DUF1846"/>
    <property type="match status" value="1"/>
</dbReference>
<dbReference type="Pfam" id="PF20921">
    <property type="entry name" value="DUF1846_C"/>
    <property type="match status" value="1"/>
</dbReference>
<dbReference type="PIRSF" id="PIRSF033132">
    <property type="entry name" value="DUF1846"/>
    <property type="match status" value="1"/>
</dbReference>